<feature type="chain" id="PRO_1000204101" description="DNA repair protein RecO">
    <location>
        <begin position="1"/>
        <end position="246"/>
    </location>
</feature>
<name>RECO_MARSD</name>
<proteinExistence type="inferred from homology"/>
<dbReference type="EMBL" id="CP001649">
    <property type="protein sequence ID" value="ACS80044.1"/>
    <property type="molecule type" value="Genomic_DNA"/>
</dbReference>
<dbReference type="RefSeq" id="WP_015851860.1">
    <property type="nucleotide sequence ID" value="NC_012881.1"/>
</dbReference>
<dbReference type="SMR" id="C6BV69"/>
<dbReference type="STRING" id="526222.Desal_1984"/>
<dbReference type="KEGG" id="dsa:Desal_1984"/>
<dbReference type="eggNOG" id="COG1381">
    <property type="taxonomic scope" value="Bacteria"/>
</dbReference>
<dbReference type="HOGENOM" id="CLU_066632_2_1_7"/>
<dbReference type="OrthoDB" id="9780797at2"/>
<dbReference type="Proteomes" id="UP000002601">
    <property type="component" value="Chromosome"/>
</dbReference>
<dbReference type="GO" id="GO:0043590">
    <property type="term" value="C:bacterial nucleoid"/>
    <property type="evidence" value="ECO:0007669"/>
    <property type="project" value="TreeGrafter"/>
</dbReference>
<dbReference type="GO" id="GO:0006310">
    <property type="term" value="P:DNA recombination"/>
    <property type="evidence" value="ECO:0007669"/>
    <property type="project" value="UniProtKB-UniRule"/>
</dbReference>
<dbReference type="GO" id="GO:0006302">
    <property type="term" value="P:double-strand break repair"/>
    <property type="evidence" value="ECO:0007669"/>
    <property type="project" value="TreeGrafter"/>
</dbReference>
<dbReference type="Gene3D" id="2.40.50.140">
    <property type="entry name" value="Nucleic acid-binding proteins"/>
    <property type="match status" value="1"/>
</dbReference>
<dbReference type="Gene3D" id="1.20.1440.120">
    <property type="entry name" value="Recombination protein O, C-terminal domain"/>
    <property type="match status" value="1"/>
</dbReference>
<dbReference type="Gene3D" id="6.20.220.20">
    <property type="entry name" value="Recombination protein O, zinc-binding domain"/>
    <property type="match status" value="1"/>
</dbReference>
<dbReference type="HAMAP" id="MF_00201">
    <property type="entry name" value="RecO"/>
    <property type="match status" value="1"/>
</dbReference>
<dbReference type="InterPro" id="IPR037278">
    <property type="entry name" value="ARFGAP/RecO"/>
</dbReference>
<dbReference type="InterPro" id="IPR022572">
    <property type="entry name" value="DNA_rep/recomb_RecO_N"/>
</dbReference>
<dbReference type="InterPro" id="IPR012340">
    <property type="entry name" value="NA-bd_OB-fold"/>
</dbReference>
<dbReference type="InterPro" id="IPR003717">
    <property type="entry name" value="RecO"/>
</dbReference>
<dbReference type="InterPro" id="IPR042242">
    <property type="entry name" value="RecO_C"/>
</dbReference>
<dbReference type="NCBIfam" id="TIGR00613">
    <property type="entry name" value="reco"/>
    <property type="match status" value="1"/>
</dbReference>
<dbReference type="PANTHER" id="PTHR33991">
    <property type="entry name" value="DNA REPAIR PROTEIN RECO"/>
    <property type="match status" value="1"/>
</dbReference>
<dbReference type="PANTHER" id="PTHR33991:SF1">
    <property type="entry name" value="DNA REPAIR PROTEIN RECO"/>
    <property type="match status" value="1"/>
</dbReference>
<dbReference type="Pfam" id="PF02565">
    <property type="entry name" value="RecO_C"/>
    <property type="match status" value="1"/>
</dbReference>
<dbReference type="Pfam" id="PF11967">
    <property type="entry name" value="RecO_N"/>
    <property type="match status" value="1"/>
</dbReference>
<dbReference type="SUPFAM" id="SSF57863">
    <property type="entry name" value="ArfGap/RecO-like zinc finger"/>
    <property type="match status" value="1"/>
</dbReference>
<dbReference type="SUPFAM" id="SSF50249">
    <property type="entry name" value="Nucleic acid-binding proteins"/>
    <property type="match status" value="1"/>
</dbReference>
<organism>
    <name type="scientific">Maridesulfovibrio salexigens (strain ATCC 14822 / DSM 2638 / NCIMB 8403 / VKM B-1763)</name>
    <name type="common">Desulfovibrio salexigens</name>
    <dbReference type="NCBI Taxonomy" id="526222"/>
    <lineage>
        <taxon>Bacteria</taxon>
        <taxon>Pseudomonadati</taxon>
        <taxon>Thermodesulfobacteriota</taxon>
        <taxon>Desulfovibrionia</taxon>
        <taxon>Desulfovibrionales</taxon>
        <taxon>Desulfovibrionaceae</taxon>
        <taxon>Maridesulfovibrio</taxon>
    </lineage>
</organism>
<protein>
    <recommendedName>
        <fullName evidence="1">DNA repair protein RecO</fullName>
    </recommendedName>
    <alternativeName>
        <fullName evidence="1">Recombination protein O</fullName>
    </alternativeName>
</protein>
<reference key="1">
    <citation type="submission" date="2009-06" db="EMBL/GenBank/DDBJ databases">
        <title>Complete sequence of Desulfovibrio salexigens DSM 2638.</title>
        <authorList>
            <consortium name="US DOE Joint Genome Institute"/>
            <person name="Lucas S."/>
            <person name="Copeland A."/>
            <person name="Lapidus A."/>
            <person name="Glavina del Rio T."/>
            <person name="Tice H."/>
            <person name="Bruce D."/>
            <person name="Goodwin L."/>
            <person name="Pitluck S."/>
            <person name="Munk A.C."/>
            <person name="Brettin T."/>
            <person name="Detter J.C."/>
            <person name="Han C."/>
            <person name="Tapia R."/>
            <person name="Larimer F."/>
            <person name="Land M."/>
            <person name="Hauser L."/>
            <person name="Kyrpides N."/>
            <person name="Anderson I."/>
            <person name="Wall J.D."/>
            <person name="Arkin A.P."/>
            <person name="Dehal P."/>
            <person name="Chivian D."/>
            <person name="Giles B."/>
            <person name="Hazen T.C."/>
        </authorList>
    </citation>
    <scope>NUCLEOTIDE SEQUENCE [LARGE SCALE GENOMIC DNA]</scope>
    <source>
        <strain>ATCC 14822 / DSM 2638 / NCIMB 8403 / VKM B-1763</strain>
    </source>
</reference>
<comment type="function">
    <text evidence="1">Involved in DNA repair and RecF pathway recombination.</text>
</comment>
<comment type="similarity">
    <text evidence="1">Belongs to the RecO family.</text>
</comment>
<keyword id="KW-0227">DNA damage</keyword>
<keyword id="KW-0233">DNA recombination</keyword>
<keyword id="KW-0234">DNA repair</keyword>
<keyword id="KW-1185">Reference proteome</keyword>
<sequence length="246" mass="27712">MELTEKVVILKTGKFKENDLWVRFLSATRGVQNAFAFGGSRSRRRFGGCLEPFSQVLFKTGTNKTGTYQVLQEGSLVKGYPGIRSDFRKMGLAANCFKFIESAVLERDGNRAVFDLLTETLDVIEEADPDDFFPLFFRAKVAFEQGYNPDFTICAQCGKPLFSSRPVVFNIEKGQLNCLDCNDGRQGETISSGTARTLAWIQDTGPASWINLRLPADIRQECFSVMDRFMAYHMGVVWEGNGYRKI</sequence>
<accession>C6BV69</accession>
<evidence type="ECO:0000255" key="1">
    <source>
        <dbReference type="HAMAP-Rule" id="MF_00201"/>
    </source>
</evidence>
<gene>
    <name evidence="1" type="primary">recO</name>
    <name type="ordered locus">Desal_1984</name>
</gene>